<feature type="chain" id="PRO_1000026019" description="Thiazole synthase">
    <location>
        <begin position="1"/>
        <end position="260"/>
    </location>
</feature>
<feature type="active site" description="Schiff-base intermediate with DXP" evidence="1">
    <location>
        <position position="96"/>
    </location>
</feature>
<feature type="binding site" evidence="1">
    <location>
        <position position="157"/>
    </location>
    <ligand>
        <name>1-deoxy-D-xylulose 5-phosphate</name>
        <dbReference type="ChEBI" id="CHEBI:57792"/>
    </ligand>
</feature>
<feature type="binding site" evidence="1">
    <location>
        <begin position="184"/>
        <end position="185"/>
    </location>
    <ligand>
        <name>1-deoxy-D-xylulose 5-phosphate</name>
        <dbReference type="ChEBI" id="CHEBI:57792"/>
    </ligand>
</feature>
<feature type="binding site" evidence="1">
    <location>
        <begin position="206"/>
        <end position="207"/>
    </location>
    <ligand>
        <name>1-deoxy-D-xylulose 5-phosphate</name>
        <dbReference type="ChEBI" id="CHEBI:57792"/>
    </ligand>
</feature>
<gene>
    <name evidence="1" type="primary">thiG</name>
    <name type="ordered locus">Nham_2893</name>
</gene>
<comment type="function">
    <text evidence="1">Catalyzes the rearrangement of 1-deoxy-D-xylulose 5-phosphate (DXP) to produce the thiazole phosphate moiety of thiamine. Sulfur is provided by the thiocarboxylate moiety of the carrier protein ThiS. In vitro, sulfur can be provided by H(2)S.</text>
</comment>
<comment type="catalytic activity">
    <reaction evidence="1">
        <text>[ThiS sulfur-carrier protein]-C-terminal-Gly-aminoethanethioate + 2-iminoacetate + 1-deoxy-D-xylulose 5-phosphate = [ThiS sulfur-carrier protein]-C-terminal Gly-Gly + 2-[(2R,5Z)-2-carboxy-4-methylthiazol-5(2H)-ylidene]ethyl phosphate + 2 H2O + H(+)</text>
        <dbReference type="Rhea" id="RHEA:26297"/>
        <dbReference type="Rhea" id="RHEA-COMP:12909"/>
        <dbReference type="Rhea" id="RHEA-COMP:19908"/>
        <dbReference type="ChEBI" id="CHEBI:15377"/>
        <dbReference type="ChEBI" id="CHEBI:15378"/>
        <dbReference type="ChEBI" id="CHEBI:57792"/>
        <dbReference type="ChEBI" id="CHEBI:62899"/>
        <dbReference type="ChEBI" id="CHEBI:77846"/>
        <dbReference type="ChEBI" id="CHEBI:90778"/>
        <dbReference type="ChEBI" id="CHEBI:232372"/>
        <dbReference type="EC" id="2.8.1.10"/>
    </reaction>
</comment>
<comment type="pathway">
    <text evidence="1">Cofactor biosynthesis; thiamine diphosphate biosynthesis.</text>
</comment>
<comment type="subunit">
    <text evidence="1">Homotetramer. Forms heterodimers with either ThiH or ThiS.</text>
</comment>
<comment type="subcellular location">
    <subcellularLocation>
        <location evidence="1">Cytoplasm</location>
    </subcellularLocation>
</comment>
<comment type="similarity">
    <text evidence="1">Belongs to the ThiG family.</text>
</comment>
<organism>
    <name type="scientific">Nitrobacter hamburgensis (strain DSM 10229 / NCIMB 13809 / X14)</name>
    <dbReference type="NCBI Taxonomy" id="323097"/>
    <lineage>
        <taxon>Bacteria</taxon>
        <taxon>Pseudomonadati</taxon>
        <taxon>Pseudomonadota</taxon>
        <taxon>Alphaproteobacteria</taxon>
        <taxon>Hyphomicrobiales</taxon>
        <taxon>Nitrobacteraceae</taxon>
        <taxon>Nitrobacter</taxon>
    </lineage>
</organism>
<keyword id="KW-0963">Cytoplasm</keyword>
<keyword id="KW-1185">Reference proteome</keyword>
<keyword id="KW-0704">Schiff base</keyword>
<keyword id="KW-0784">Thiamine biosynthesis</keyword>
<keyword id="KW-0808">Transferase</keyword>
<reference key="1">
    <citation type="submission" date="2006-03" db="EMBL/GenBank/DDBJ databases">
        <title>Complete sequence of chromosome of Nitrobacter hamburgensis X14.</title>
        <authorList>
            <consortium name="US DOE Joint Genome Institute"/>
            <person name="Copeland A."/>
            <person name="Lucas S."/>
            <person name="Lapidus A."/>
            <person name="Barry K."/>
            <person name="Detter J.C."/>
            <person name="Glavina del Rio T."/>
            <person name="Hammon N."/>
            <person name="Israni S."/>
            <person name="Dalin E."/>
            <person name="Tice H."/>
            <person name="Pitluck S."/>
            <person name="Chain P."/>
            <person name="Malfatti S."/>
            <person name="Shin M."/>
            <person name="Vergez L."/>
            <person name="Schmutz J."/>
            <person name="Larimer F."/>
            <person name="Land M."/>
            <person name="Hauser L."/>
            <person name="Kyrpides N."/>
            <person name="Ivanova N."/>
            <person name="Ward B."/>
            <person name="Arp D."/>
            <person name="Klotz M."/>
            <person name="Stein L."/>
            <person name="O'Mullan G."/>
            <person name="Starkenburg S."/>
            <person name="Sayavedra L."/>
            <person name="Poret-Peterson A.T."/>
            <person name="Gentry M.E."/>
            <person name="Bruce D."/>
            <person name="Richardson P."/>
        </authorList>
    </citation>
    <scope>NUCLEOTIDE SEQUENCE [LARGE SCALE GENOMIC DNA]</scope>
    <source>
        <strain>DSM 10229 / NCIMB 13809 / X14</strain>
    </source>
</reference>
<evidence type="ECO:0000255" key="1">
    <source>
        <dbReference type="HAMAP-Rule" id="MF_00443"/>
    </source>
</evidence>
<name>THIG_NITHX</name>
<dbReference type="EC" id="2.8.1.10" evidence="1"/>
<dbReference type="EMBL" id="CP000319">
    <property type="protein sequence ID" value="ABE63661.1"/>
    <property type="molecule type" value="Genomic_DNA"/>
</dbReference>
<dbReference type="RefSeq" id="WP_011511325.1">
    <property type="nucleotide sequence ID" value="NC_007964.1"/>
</dbReference>
<dbReference type="SMR" id="Q1QJD6"/>
<dbReference type="STRING" id="323097.Nham_2893"/>
<dbReference type="KEGG" id="nha:Nham_2893"/>
<dbReference type="eggNOG" id="COG2022">
    <property type="taxonomic scope" value="Bacteria"/>
</dbReference>
<dbReference type="HOGENOM" id="CLU_062233_1_0_5"/>
<dbReference type="OrthoDB" id="9805935at2"/>
<dbReference type="UniPathway" id="UPA00060"/>
<dbReference type="Proteomes" id="UP000001953">
    <property type="component" value="Chromosome"/>
</dbReference>
<dbReference type="GO" id="GO:0005737">
    <property type="term" value="C:cytoplasm"/>
    <property type="evidence" value="ECO:0007669"/>
    <property type="project" value="UniProtKB-SubCell"/>
</dbReference>
<dbReference type="GO" id="GO:1990107">
    <property type="term" value="F:thiazole synthase activity"/>
    <property type="evidence" value="ECO:0007669"/>
    <property type="project" value="UniProtKB-EC"/>
</dbReference>
<dbReference type="GO" id="GO:0009229">
    <property type="term" value="P:thiamine diphosphate biosynthetic process"/>
    <property type="evidence" value="ECO:0007669"/>
    <property type="project" value="UniProtKB-UniRule"/>
</dbReference>
<dbReference type="CDD" id="cd04728">
    <property type="entry name" value="ThiG"/>
    <property type="match status" value="1"/>
</dbReference>
<dbReference type="Gene3D" id="3.20.20.70">
    <property type="entry name" value="Aldolase class I"/>
    <property type="match status" value="1"/>
</dbReference>
<dbReference type="HAMAP" id="MF_00443">
    <property type="entry name" value="ThiG"/>
    <property type="match status" value="1"/>
</dbReference>
<dbReference type="InterPro" id="IPR013785">
    <property type="entry name" value="Aldolase_TIM"/>
</dbReference>
<dbReference type="InterPro" id="IPR033983">
    <property type="entry name" value="Thiazole_synthase_ThiG"/>
</dbReference>
<dbReference type="InterPro" id="IPR008867">
    <property type="entry name" value="ThiG"/>
</dbReference>
<dbReference type="PANTHER" id="PTHR34266">
    <property type="entry name" value="THIAZOLE SYNTHASE"/>
    <property type="match status" value="1"/>
</dbReference>
<dbReference type="PANTHER" id="PTHR34266:SF2">
    <property type="entry name" value="THIAZOLE SYNTHASE"/>
    <property type="match status" value="1"/>
</dbReference>
<dbReference type="Pfam" id="PF05690">
    <property type="entry name" value="ThiG"/>
    <property type="match status" value="1"/>
</dbReference>
<dbReference type="SUPFAM" id="SSF110399">
    <property type="entry name" value="ThiG-like"/>
    <property type="match status" value="1"/>
</dbReference>
<protein>
    <recommendedName>
        <fullName evidence="1">Thiazole synthase</fullName>
        <ecNumber evidence="1">2.8.1.10</ecNumber>
    </recommendedName>
</protein>
<accession>Q1QJD6</accession>
<proteinExistence type="inferred from homology"/>
<sequence length="260" mass="27648">MLKFYDREFSSRLLIGTALYPSPKIMQDAIRAAGSQIVTVSLRRETAGGRTGDAFWSLIRELDVTVLPNTAGCKSVREAVTTAKLARELFGTSWIKLEVIADNDTLQPDVIGLVEAAAVLIKDGFKVFPYCTEDLGVAMRLVEVGCKVVMPWAAPIGSAKGIVNRDALRLLRERLPDITLVVDAGIGAPSHAAQACELGYDAVLLNTAVAKAADPVAMAGAFSLAVEAGRTAFEAGLMEARDFASPSTPVVGTPFWHAVS</sequence>